<dbReference type="EMBL" id="AL009126">
    <property type="protein sequence ID" value="CAB13745.1"/>
    <property type="molecule type" value="Genomic_DNA"/>
</dbReference>
<dbReference type="EMBL" id="AF027868">
    <property type="protein sequence ID" value="AAB84418.1"/>
    <property type="molecule type" value="Genomic_DNA"/>
</dbReference>
<dbReference type="PIR" id="B69930">
    <property type="entry name" value="B69930"/>
</dbReference>
<dbReference type="RefSeq" id="NP_389734.1">
    <property type="nucleotide sequence ID" value="NC_000964.3"/>
</dbReference>
<dbReference type="RefSeq" id="WP_003231443.1">
    <property type="nucleotide sequence ID" value="NZ_OZ025638.1"/>
</dbReference>
<dbReference type="FunCoup" id="P28671">
    <property type="interactions" value="55"/>
</dbReference>
<dbReference type="STRING" id="224308.BSU18520"/>
<dbReference type="PaxDb" id="224308-BSU18520"/>
<dbReference type="DNASU" id="940087"/>
<dbReference type="EnsemblBacteria" id="CAB13745">
    <property type="protein sequence ID" value="CAB13745"/>
    <property type="gene ID" value="BSU_18520"/>
</dbReference>
<dbReference type="GeneID" id="940087"/>
<dbReference type="KEGG" id="bsu:BSU18520"/>
<dbReference type="PATRIC" id="fig|224308.179.peg.2019"/>
<dbReference type="eggNOG" id="ENOG502ZCGB">
    <property type="taxonomic scope" value="Bacteria"/>
</dbReference>
<dbReference type="InParanoid" id="P28671"/>
<dbReference type="OrthoDB" id="573462at2"/>
<dbReference type="BioCyc" id="BSUB:BSU18520-MONOMER"/>
<dbReference type="Proteomes" id="UP000001570">
    <property type="component" value="Chromosome"/>
</dbReference>
<gene>
    <name type="primary">yoxB</name>
    <name type="ordered locus">BSU18520</name>
</gene>
<feature type="chain" id="PRO_0000049667" description="Uncharacterized protein YoxB">
    <location>
        <begin position="1"/>
        <end position="256"/>
    </location>
</feature>
<reference key="1">
    <citation type="journal article" date="1997" name="Nature">
        <title>The complete genome sequence of the Gram-positive bacterium Bacillus subtilis.</title>
        <authorList>
            <person name="Kunst F."/>
            <person name="Ogasawara N."/>
            <person name="Moszer I."/>
            <person name="Albertini A.M."/>
            <person name="Alloni G."/>
            <person name="Azevedo V."/>
            <person name="Bertero M.G."/>
            <person name="Bessieres P."/>
            <person name="Bolotin A."/>
            <person name="Borchert S."/>
            <person name="Borriss R."/>
            <person name="Boursier L."/>
            <person name="Brans A."/>
            <person name="Braun M."/>
            <person name="Brignell S.C."/>
            <person name="Bron S."/>
            <person name="Brouillet S."/>
            <person name="Bruschi C.V."/>
            <person name="Caldwell B."/>
            <person name="Capuano V."/>
            <person name="Carter N.M."/>
            <person name="Choi S.-K."/>
            <person name="Codani J.-J."/>
            <person name="Connerton I.F."/>
            <person name="Cummings N.J."/>
            <person name="Daniel R.A."/>
            <person name="Denizot F."/>
            <person name="Devine K.M."/>
            <person name="Duesterhoeft A."/>
            <person name="Ehrlich S.D."/>
            <person name="Emmerson P.T."/>
            <person name="Entian K.-D."/>
            <person name="Errington J."/>
            <person name="Fabret C."/>
            <person name="Ferrari E."/>
            <person name="Foulger D."/>
            <person name="Fritz C."/>
            <person name="Fujita M."/>
            <person name="Fujita Y."/>
            <person name="Fuma S."/>
            <person name="Galizzi A."/>
            <person name="Galleron N."/>
            <person name="Ghim S.-Y."/>
            <person name="Glaser P."/>
            <person name="Goffeau A."/>
            <person name="Golightly E.J."/>
            <person name="Grandi G."/>
            <person name="Guiseppi G."/>
            <person name="Guy B.J."/>
            <person name="Haga K."/>
            <person name="Haiech J."/>
            <person name="Harwood C.R."/>
            <person name="Henaut A."/>
            <person name="Hilbert H."/>
            <person name="Holsappel S."/>
            <person name="Hosono S."/>
            <person name="Hullo M.-F."/>
            <person name="Itaya M."/>
            <person name="Jones L.-M."/>
            <person name="Joris B."/>
            <person name="Karamata D."/>
            <person name="Kasahara Y."/>
            <person name="Klaerr-Blanchard M."/>
            <person name="Klein C."/>
            <person name="Kobayashi Y."/>
            <person name="Koetter P."/>
            <person name="Koningstein G."/>
            <person name="Krogh S."/>
            <person name="Kumano M."/>
            <person name="Kurita K."/>
            <person name="Lapidus A."/>
            <person name="Lardinois S."/>
            <person name="Lauber J."/>
            <person name="Lazarevic V."/>
            <person name="Lee S.-M."/>
            <person name="Levine A."/>
            <person name="Liu H."/>
            <person name="Masuda S."/>
            <person name="Mauel C."/>
            <person name="Medigue C."/>
            <person name="Medina N."/>
            <person name="Mellado R.P."/>
            <person name="Mizuno M."/>
            <person name="Moestl D."/>
            <person name="Nakai S."/>
            <person name="Noback M."/>
            <person name="Noone D."/>
            <person name="O'Reilly M."/>
            <person name="Ogawa K."/>
            <person name="Ogiwara A."/>
            <person name="Oudega B."/>
            <person name="Park S.-H."/>
            <person name="Parro V."/>
            <person name="Pohl T.M."/>
            <person name="Portetelle D."/>
            <person name="Porwollik S."/>
            <person name="Prescott A.M."/>
            <person name="Presecan E."/>
            <person name="Pujic P."/>
            <person name="Purnelle B."/>
            <person name="Rapoport G."/>
            <person name="Rey M."/>
            <person name="Reynolds S."/>
            <person name="Rieger M."/>
            <person name="Rivolta C."/>
            <person name="Rocha E."/>
            <person name="Roche B."/>
            <person name="Rose M."/>
            <person name="Sadaie Y."/>
            <person name="Sato T."/>
            <person name="Scanlan E."/>
            <person name="Schleich S."/>
            <person name="Schroeter R."/>
            <person name="Scoffone F."/>
            <person name="Sekiguchi J."/>
            <person name="Sekowska A."/>
            <person name="Seror S.J."/>
            <person name="Serror P."/>
            <person name="Shin B.-S."/>
            <person name="Soldo B."/>
            <person name="Sorokin A."/>
            <person name="Tacconi E."/>
            <person name="Takagi T."/>
            <person name="Takahashi H."/>
            <person name="Takemaru K."/>
            <person name="Takeuchi M."/>
            <person name="Tamakoshi A."/>
            <person name="Tanaka T."/>
            <person name="Terpstra P."/>
            <person name="Tognoni A."/>
            <person name="Tosato V."/>
            <person name="Uchiyama S."/>
            <person name="Vandenbol M."/>
            <person name="Vannier F."/>
            <person name="Vassarotti A."/>
            <person name="Viari A."/>
            <person name="Wambutt R."/>
            <person name="Wedler E."/>
            <person name="Wedler H."/>
            <person name="Weitzenegger T."/>
            <person name="Winters P."/>
            <person name="Wipat A."/>
            <person name="Yamamoto H."/>
            <person name="Yamane K."/>
            <person name="Yasumoto K."/>
            <person name="Yata K."/>
            <person name="Yoshida K."/>
            <person name="Yoshikawa H.-F."/>
            <person name="Zumstein E."/>
            <person name="Yoshikawa H."/>
            <person name="Danchin A."/>
        </authorList>
    </citation>
    <scope>NUCLEOTIDE SEQUENCE [LARGE SCALE GENOMIC DNA]</scope>
    <source>
        <strain>168</strain>
    </source>
</reference>
<reference key="2">
    <citation type="submission" date="1997-11" db="EMBL/GenBank/DDBJ databases">
        <title>Sequence analysis of the Bacillus subtilis chromosome region between the terC and odhAB loci cloned in a yeast artificial chromosome.</title>
        <authorList>
            <person name="Lapidus A."/>
            <person name="Galleron N."/>
            <person name="Sorokin A."/>
            <person name="Ehrlich S.D."/>
        </authorList>
    </citation>
    <scope>NUCLEOTIDE SEQUENCE [GENOMIC DNA] OF 72-256</scope>
</reference>
<sequence length="256" mass="28452">MIINRSCLKEFAEKVHFLPSSLTKSDLLTDPFRLHQENELGIYYSPHNEFINRDASLVIAGITPGFSQMKTAYETAAESLLQGGTLEQMAVDTKIAAGFSGSMRHNLITMLDLCGLPQAFGIQSAAKLFGELRHMLHTTSVIKYPVFIQQKNYTGYKPAITHSPILSTYAFGHFPAELNHVTGPALLIPLGKAAETVCETLIRQHSLQNLICLNGFPHPSGANGHRLKQFSKNKEQLERQIRSFAALVDFAIEKRK</sequence>
<proteinExistence type="predicted"/>
<keyword id="KW-1185">Reference proteome</keyword>
<accession>P28671</accession>
<accession>O54515</accession>
<name>YOXB_BACSU</name>
<protein>
    <recommendedName>
        <fullName>Uncharacterized protein YoxB</fullName>
    </recommendedName>
    <alternativeName>
        <fullName>ORF119+</fullName>
    </alternativeName>
</protein>
<organism>
    <name type="scientific">Bacillus subtilis (strain 168)</name>
    <dbReference type="NCBI Taxonomy" id="224308"/>
    <lineage>
        <taxon>Bacteria</taxon>
        <taxon>Bacillati</taxon>
        <taxon>Bacillota</taxon>
        <taxon>Bacilli</taxon>
        <taxon>Bacillales</taxon>
        <taxon>Bacillaceae</taxon>
        <taxon>Bacillus</taxon>
    </lineage>
</organism>